<name>UBIE_COXB1</name>
<protein>
    <recommendedName>
        <fullName evidence="1">Ubiquinone/menaquinone biosynthesis C-methyltransferase UbiE</fullName>
        <ecNumber evidence="1">2.1.1.163</ecNumber>
        <ecNumber evidence="1">2.1.1.201</ecNumber>
    </recommendedName>
    <alternativeName>
        <fullName evidence="1">2-methoxy-6-polyprenyl-1,4-benzoquinol methylase</fullName>
    </alternativeName>
    <alternativeName>
        <fullName evidence="1">Demethylmenaquinone methyltransferase</fullName>
    </alternativeName>
</protein>
<organism>
    <name type="scientific">Coxiella burnetii (strain CbuK_Q154)</name>
    <name type="common">Coxiella burnetii (strain Q154)</name>
    <dbReference type="NCBI Taxonomy" id="434924"/>
    <lineage>
        <taxon>Bacteria</taxon>
        <taxon>Pseudomonadati</taxon>
        <taxon>Pseudomonadota</taxon>
        <taxon>Gammaproteobacteria</taxon>
        <taxon>Legionellales</taxon>
        <taxon>Coxiellaceae</taxon>
        <taxon>Coxiella</taxon>
    </lineage>
</organism>
<feature type="chain" id="PRO_1000187749" description="Ubiquinone/menaquinone biosynthesis C-methyltransferase UbiE">
    <location>
        <begin position="1"/>
        <end position="250"/>
    </location>
</feature>
<feature type="binding site" evidence="1">
    <location>
        <position position="73"/>
    </location>
    <ligand>
        <name>S-adenosyl-L-methionine</name>
        <dbReference type="ChEBI" id="CHEBI:59789"/>
    </ligand>
</feature>
<feature type="binding site" evidence="1">
    <location>
        <position position="94"/>
    </location>
    <ligand>
        <name>S-adenosyl-L-methionine</name>
        <dbReference type="ChEBI" id="CHEBI:59789"/>
    </ligand>
</feature>
<feature type="binding site" evidence="1">
    <location>
        <begin position="122"/>
        <end position="123"/>
    </location>
    <ligand>
        <name>S-adenosyl-L-methionine</name>
        <dbReference type="ChEBI" id="CHEBI:59789"/>
    </ligand>
</feature>
<gene>
    <name evidence="1" type="primary">ubiE</name>
    <name type="ordered locus">CbuK_2068</name>
</gene>
<reference key="1">
    <citation type="journal article" date="2009" name="Infect. Immun.">
        <title>Comparative genomics reveal extensive transposon-mediated genomic plasticity and diversity among potential effector proteins within the genus Coxiella.</title>
        <authorList>
            <person name="Beare P.A."/>
            <person name="Unsworth N."/>
            <person name="Andoh M."/>
            <person name="Voth D.E."/>
            <person name="Omsland A."/>
            <person name="Gilk S.D."/>
            <person name="Williams K.P."/>
            <person name="Sobral B.W."/>
            <person name="Kupko J.J. III"/>
            <person name="Porcella S.F."/>
            <person name="Samuel J.E."/>
            <person name="Heinzen R.A."/>
        </authorList>
    </citation>
    <scope>NUCLEOTIDE SEQUENCE [LARGE SCALE GENOMIC DNA]</scope>
    <source>
        <strain>CbuK_Q154</strain>
    </source>
</reference>
<proteinExistence type="inferred from homology"/>
<sequence length="250" mass="28336">MNETEKSTHFGYQTVPTDQKTDKVKHVFESVAAKYDLMNDLMSLGIHRWWKDFAITQCRLRTGQRILDLAGGTGDLAKRISPLVGDEGEVVIADINAAMLNVGRRRLLDQGIFRNIQFIQADAEKLPFPNNFFDRIVIGFGLRNVTNQLAALQSMHRVIKPGGFVVILEFSKPTLAPLKAVYDAYSFQLLPRLGKLVAKDEESYRYLVESIRMHPDQEALLSKMTDARFEDCDYHNLSGGIVAVHRGYKF</sequence>
<comment type="function">
    <text evidence="1">Methyltransferase required for the conversion of demethylmenaquinol (DMKH2) to menaquinol (MKH2) and the conversion of 2-polyprenyl-6-methoxy-1,4-benzoquinol (DDMQH2) to 2-polyprenyl-3-methyl-6-methoxy-1,4-benzoquinol (DMQH2).</text>
</comment>
<comment type="catalytic activity">
    <reaction evidence="1">
        <text>a 2-demethylmenaquinol + S-adenosyl-L-methionine = a menaquinol + S-adenosyl-L-homocysteine + H(+)</text>
        <dbReference type="Rhea" id="RHEA:42640"/>
        <dbReference type="Rhea" id="RHEA-COMP:9539"/>
        <dbReference type="Rhea" id="RHEA-COMP:9563"/>
        <dbReference type="ChEBI" id="CHEBI:15378"/>
        <dbReference type="ChEBI" id="CHEBI:18151"/>
        <dbReference type="ChEBI" id="CHEBI:55437"/>
        <dbReference type="ChEBI" id="CHEBI:57856"/>
        <dbReference type="ChEBI" id="CHEBI:59789"/>
        <dbReference type="EC" id="2.1.1.163"/>
    </reaction>
</comment>
<comment type="catalytic activity">
    <reaction evidence="1">
        <text>a 2-methoxy-6-(all-trans-polyprenyl)benzene-1,4-diol + S-adenosyl-L-methionine = a 5-methoxy-2-methyl-3-(all-trans-polyprenyl)benzene-1,4-diol + S-adenosyl-L-homocysteine + H(+)</text>
        <dbReference type="Rhea" id="RHEA:28286"/>
        <dbReference type="Rhea" id="RHEA-COMP:10858"/>
        <dbReference type="Rhea" id="RHEA-COMP:10859"/>
        <dbReference type="ChEBI" id="CHEBI:15378"/>
        <dbReference type="ChEBI" id="CHEBI:57856"/>
        <dbReference type="ChEBI" id="CHEBI:59789"/>
        <dbReference type="ChEBI" id="CHEBI:84166"/>
        <dbReference type="ChEBI" id="CHEBI:84167"/>
        <dbReference type="EC" id="2.1.1.201"/>
    </reaction>
</comment>
<comment type="pathway">
    <text evidence="1">Quinol/quinone metabolism; menaquinone biosynthesis; menaquinol from 1,4-dihydroxy-2-naphthoate: step 2/2.</text>
</comment>
<comment type="pathway">
    <text evidence="1">Cofactor biosynthesis; ubiquinone biosynthesis.</text>
</comment>
<comment type="similarity">
    <text evidence="1">Belongs to the class I-like SAM-binding methyltransferase superfamily. MenG/UbiE family.</text>
</comment>
<accession>B6J676</accession>
<evidence type="ECO:0000255" key="1">
    <source>
        <dbReference type="HAMAP-Rule" id="MF_01813"/>
    </source>
</evidence>
<keyword id="KW-0474">Menaquinone biosynthesis</keyword>
<keyword id="KW-0489">Methyltransferase</keyword>
<keyword id="KW-0949">S-adenosyl-L-methionine</keyword>
<keyword id="KW-0808">Transferase</keyword>
<keyword id="KW-0831">Ubiquinone biosynthesis</keyword>
<dbReference type="EC" id="2.1.1.163" evidence="1"/>
<dbReference type="EC" id="2.1.1.201" evidence="1"/>
<dbReference type="EMBL" id="CP001020">
    <property type="protein sequence ID" value="ACJ21167.1"/>
    <property type="molecule type" value="Genomic_DNA"/>
</dbReference>
<dbReference type="RefSeq" id="WP_005769782.1">
    <property type="nucleotide sequence ID" value="NC_011528.1"/>
</dbReference>
<dbReference type="SMR" id="B6J676"/>
<dbReference type="KEGG" id="cbc:CbuK_2068"/>
<dbReference type="HOGENOM" id="CLU_037990_0_0_6"/>
<dbReference type="UniPathway" id="UPA00079">
    <property type="reaction ID" value="UER00169"/>
</dbReference>
<dbReference type="UniPathway" id="UPA00232"/>
<dbReference type="GO" id="GO:0008425">
    <property type="term" value="F:2-methoxy-6-polyprenyl-1,4-benzoquinol methyltransferase activity"/>
    <property type="evidence" value="ECO:0007669"/>
    <property type="project" value="UniProtKB-UniRule"/>
</dbReference>
<dbReference type="GO" id="GO:0043770">
    <property type="term" value="F:demethylmenaquinone methyltransferase activity"/>
    <property type="evidence" value="ECO:0007669"/>
    <property type="project" value="UniProtKB-UniRule"/>
</dbReference>
<dbReference type="GO" id="GO:0009060">
    <property type="term" value="P:aerobic respiration"/>
    <property type="evidence" value="ECO:0007669"/>
    <property type="project" value="UniProtKB-UniRule"/>
</dbReference>
<dbReference type="GO" id="GO:0009234">
    <property type="term" value="P:menaquinone biosynthetic process"/>
    <property type="evidence" value="ECO:0007669"/>
    <property type="project" value="UniProtKB-UniRule"/>
</dbReference>
<dbReference type="GO" id="GO:0032259">
    <property type="term" value="P:methylation"/>
    <property type="evidence" value="ECO:0007669"/>
    <property type="project" value="UniProtKB-KW"/>
</dbReference>
<dbReference type="CDD" id="cd02440">
    <property type="entry name" value="AdoMet_MTases"/>
    <property type="match status" value="1"/>
</dbReference>
<dbReference type="Gene3D" id="3.40.50.150">
    <property type="entry name" value="Vaccinia Virus protein VP39"/>
    <property type="match status" value="1"/>
</dbReference>
<dbReference type="HAMAP" id="MF_01813">
    <property type="entry name" value="MenG_UbiE_methyltr"/>
    <property type="match status" value="1"/>
</dbReference>
<dbReference type="InterPro" id="IPR029063">
    <property type="entry name" value="SAM-dependent_MTases_sf"/>
</dbReference>
<dbReference type="InterPro" id="IPR004033">
    <property type="entry name" value="UbiE/COQ5_MeTrFase"/>
</dbReference>
<dbReference type="InterPro" id="IPR023576">
    <property type="entry name" value="UbiE/COQ5_MeTrFase_CS"/>
</dbReference>
<dbReference type="NCBIfam" id="TIGR01934">
    <property type="entry name" value="MenG_MenH_UbiE"/>
    <property type="match status" value="1"/>
</dbReference>
<dbReference type="NCBIfam" id="NF001240">
    <property type="entry name" value="PRK00216.1-1"/>
    <property type="match status" value="1"/>
</dbReference>
<dbReference type="NCBIfam" id="NF001244">
    <property type="entry name" value="PRK00216.1-5"/>
    <property type="match status" value="1"/>
</dbReference>
<dbReference type="PANTHER" id="PTHR43591:SF24">
    <property type="entry name" value="2-METHOXY-6-POLYPRENYL-1,4-BENZOQUINOL METHYLASE, MITOCHONDRIAL"/>
    <property type="match status" value="1"/>
</dbReference>
<dbReference type="PANTHER" id="PTHR43591">
    <property type="entry name" value="METHYLTRANSFERASE"/>
    <property type="match status" value="1"/>
</dbReference>
<dbReference type="Pfam" id="PF01209">
    <property type="entry name" value="Ubie_methyltran"/>
    <property type="match status" value="1"/>
</dbReference>
<dbReference type="SUPFAM" id="SSF53335">
    <property type="entry name" value="S-adenosyl-L-methionine-dependent methyltransferases"/>
    <property type="match status" value="1"/>
</dbReference>
<dbReference type="PROSITE" id="PS51608">
    <property type="entry name" value="SAM_MT_UBIE"/>
    <property type="match status" value="1"/>
</dbReference>
<dbReference type="PROSITE" id="PS01183">
    <property type="entry name" value="UBIE_1"/>
    <property type="match status" value="1"/>
</dbReference>
<dbReference type="PROSITE" id="PS01184">
    <property type="entry name" value="UBIE_2"/>
    <property type="match status" value="1"/>
</dbReference>